<proteinExistence type="inferred from homology"/>
<sequence length="213" mass="24268">MREALEADLRAVLNGALNMLGTVERMLPVAAEVLLHERADLLGEVRSLDREVDAQEAQLEAECLRIIALHQPVARDLRLVALILKSLSDIERMGDYVVHVAEDGAELAQAPALKKYVNLSRMLSRLTEMSQNLRTSLADRDVTRAENTTRMDDEVDELYEQIQRELVTYMLEDPRNISKALMLMRVGRSLERVGDHMENVAERVRYWVTGSRE</sequence>
<gene>
    <name type="primary">phoU</name>
    <name type="ordered locus">DR_2243</name>
</gene>
<feature type="chain" id="PRO_0000155167" description="Phosphate-specific transport system accessory protein PhoU homolog">
    <location>
        <begin position="1"/>
        <end position="213"/>
    </location>
</feature>
<reference key="1">
    <citation type="journal article" date="1999" name="Science">
        <title>Genome sequence of the radioresistant bacterium Deinococcus radiodurans R1.</title>
        <authorList>
            <person name="White O."/>
            <person name="Eisen J.A."/>
            <person name="Heidelberg J.F."/>
            <person name="Hickey E.K."/>
            <person name="Peterson J.D."/>
            <person name="Dodson R.J."/>
            <person name="Haft D.H."/>
            <person name="Gwinn M.L."/>
            <person name="Nelson W.C."/>
            <person name="Richardson D.L."/>
            <person name="Moffat K.S."/>
            <person name="Qin H."/>
            <person name="Jiang L."/>
            <person name="Pamphile W."/>
            <person name="Crosby M."/>
            <person name="Shen M."/>
            <person name="Vamathevan J.J."/>
            <person name="Lam P."/>
            <person name="McDonald L.A."/>
            <person name="Utterback T.R."/>
            <person name="Zalewski C."/>
            <person name="Makarova K.S."/>
            <person name="Aravind L."/>
            <person name="Daly M.J."/>
            <person name="Minton K.W."/>
            <person name="Fleischmann R.D."/>
            <person name="Ketchum K.A."/>
            <person name="Nelson K.E."/>
            <person name="Salzberg S.L."/>
            <person name="Smith H.O."/>
            <person name="Venter J.C."/>
            <person name="Fraser C.M."/>
        </authorList>
    </citation>
    <scope>NUCLEOTIDE SEQUENCE [LARGE SCALE GENOMIC DNA]</scope>
    <source>
        <strain>ATCC 13939 / DSM 20539 / JCM 16871 / CCUG 27074 / LMG 4051 / NBRC 15346 / NCIMB 9279 / VKM B-1422 / R1</strain>
    </source>
</reference>
<keyword id="KW-0963">Cytoplasm</keyword>
<keyword id="KW-0592">Phosphate transport</keyword>
<keyword id="KW-1185">Reference proteome</keyword>
<keyword id="KW-0813">Transport</keyword>
<dbReference type="EMBL" id="AE000513">
    <property type="protein sequence ID" value="AAF11788.1"/>
    <property type="molecule type" value="Genomic_DNA"/>
</dbReference>
<dbReference type="PIR" id="A75299">
    <property type="entry name" value="A75299"/>
</dbReference>
<dbReference type="RefSeq" id="NP_295965.1">
    <property type="nucleotide sequence ID" value="NC_001263.1"/>
</dbReference>
<dbReference type="RefSeq" id="WP_010888872.1">
    <property type="nucleotide sequence ID" value="NC_001263.1"/>
</dbReference>
<dbReference type="SMR" id="Q9RS84"/>
<dbReference type="STRING" id="243230.DR_2243"/>
<dbReference type="PaxDb" id="243230-DR_2243"/>
<dbReference type="EnsemblBacteria" id="AAF11788">
    <property type="protein sequence ID" value="AAF11788"/>
    <property type="gene ID" value="DR_2243"/>
</dbReference>
<dbReference type="GeneID" id="69518493"/>
<dbReference type="KEGG" id="dra:DR_2243"/>
<dbReference type="PATRIC" id="fig|243230.17.peg.2471"/>
<dbReference type="eggNOG" id="COG0704">
    <property type="taxonomic scope" value="Bacteria"/>
</dbReference>
<dbReference type="HOGENOM" id="CLU_078518_3_0_0"/>
<dbReference type="InParanoid" id="Q9RS84"/>
<dbReference type="OrthoDB" id="9814256at2"/>
<dbReference type="Proteomes" id="UP000002524">
    <property type="component" value="Chromosome 1"/>
</dbReference>
<dbReference type="GO" id="GO:0005737">
    <property type="term" value="C:cytoplasm"/>
    <property type="evidence" value="ECO:0000250"/>
    <property type="project" value="UniProtKB"/>
</dbReference>
<dbReference type="GO" id="GO:0042803">
    <property type="term" value="F:protein homodimerization activity"/>
    <property type="evidence" value="ECO:0000250"/>
    <property type="project" value="UniProtKB"/>
</dbReference>
<dbReference type="GO" id="GO:0030643">
    <property type="term" value="P:intracellular phosphate ion homeostasis"/>
    <property type="evidence" value="ECO:0007669"/>
    <property type="project" value="InterPro"/>
</dbReference>
<dbReference type="GO" id="GO:0045936">
    <property type="term" value="P:negative regulation of phosphate metabolic process"/>
    <property type="evidence" value="ECO:0000250"/>
    <property type="project" value="UniProtKB"/>
</dbReference>
<dbReference type="GO" id="GO:2000186">
    <property type="term" value="P:negative regulation of phosphate transmembrane transport"/>
    <property type="evidence" value="ECO:0000250"/>
    <property type="project" value="UniProtKB"/>
</dbReference>
<dbReference type="GO" id="GO:0006817">
    <property type="term" value="P:phosphate ion transport"/>
    <property type="evidence" value="ECO:0007669"/>
    <property type="project" value="UniProtKB-KW"/>
</dbReference>
<dbReference type="FunFam" id="1.20.58.220:FF:000004">
    <property type="entry name" value="Phosphate-specific transport system accessory protein PhoU"/>
    <property type="match status" value="1"/>
</dbReference>
<dbReference type="Gene3D" id="1.20.58.220">
    <property type="entry name" value="Phosphate transport system protein phou homolog 2, domain 2"/>
    <property type="match status" value="1"/>
</dbReference>
<dbReference type="InterPro" id="IPR028366">
    <property type="entry name" value="P_transport_PhoU"/>
</dbReference>
<dbReference type="InterPro" id="IPR038078">
    <property type="entry name" value="PhoU-like_sf"/>
</dbReference>
<dbReference type="InterPro" id="IPR026022">
    <property type="entry name" value="PhoU_dom"/>
</dbReference>
<dbReference type="NCBIfam" id="TIGR02135">
    <property type="entry name" value="phoU_full"/>
    <property type="match status" value="1"/>
</dbReference>
<dbReference type="PANTHER" id="PTHR42930">
    <property type="entry name" value="PHOSPHATE-SPECIFIC TRANSPORT SYSTEM ACCESSORY PROTEIN PHOU"/>
    <property type="match status" value="1"/>
</dbReference>
<dbReference type="PANTHER" id="PTHR42930:SF3">
    <property type="entry name" value="PHOSPHATE-SPECIFIC TRANSPORT SYSTEM ACCESSORY PROTEIN PHOU"/>
    <property type="match status" value="1"/>
</dbReference>
<dbReference type="Pfam" id="PF01895">
    <property type="entry name" value="PhoU"/>
    <property type="match status" value="2"/>
</dbReference>
<dbReference type="PIRSF" id="PIRSF003107">
    <property type="entry name" value="PhoU"/>
    <property type="match status" value="1"/>
</dbReference>
<dbReference type="SUPFAM" id="SSF109755">
    <property type="entry name" value="PhoU-like"/>
    <property type="match status" value="1"/>
</dbReference>
<protein>
    <recommendedName>
        <fullName>Phosphate-specific transport system accessory protein PhoU homolog</fullName>
        <shortName>Pst system accessory protein PhoU homolog</shortName>
    </recommendedName>
</protein>
<organism>
    <name type="scientific">Deinococcus radiodurans (strain ATCC 13939 / DSM 20539 / JCM 16871 / CCUG 27074 / LMG 4051 / NBRC 15346 / NCIMB 9279 / VKM B-1422 / R1)</name>
    <dbReference type="NCBI Taxonomy" id="243230"/>
    <lineage>
        <taxon>Bacteria</taxon>
        <taxon>Thermotogati</taxon>
        <taxon>Deinococcota</taxon>
        <taxon>Deinococci</taxon>
        <taxon>Deinococcales</taxon>
        <taxon>Deinococcaceae</taxon>
        <taxon>Deinococcus</taxon>
    </lineage>
</organism>
<comment type="function">
    <text evidence="1">Plays a role in the regulation of phosphate uptake.</text>
</comment>
<comment type="subunit">
    <text evidence="1">Homodimer.</text>
</comment>
<comment type="subcellular location">
    <subcellularLocation>
        <location evidence="1">Cytoplasm</location>
    </subcellularLocation>
</comment>
<comment type="similarity">
    <text evidence="2">Belongs to the PhoU family.</text>
</comment>
<accession>Q9RS84</accession>
<name>PHOU_DEIRA</name>
<evidence type="ECO:0000250" key="1"/>
<evidence type="ECO:0000305" key="2"/>